<protein>
    <recommendedName>
        <fullName evidence="1">Maturase K</fullName>
    </recommendedName>
    <alternativeName>
        <fullName evidence="1">Intron maturase</fullName>
    </alternativeName>
</protein>
<organism>
    <name type="scientific">Cynodon dactylon</name>
    <name type="common">Bermuda grass</name>
    <name type="synonym">Panicum dactylon</name>
    <dbReference type="NCBI Taxonomy" id="28909"/>
    <lineage>
        <taxon>Eukaryota</taxon>
        <taxon>Viridiplantae</taxon>
        <taxon>Streptophyta</taxon>
        <taxon>Embryophyta</taxon>
        <taxon>Tracheophyta</taxon>
        <taxon>Spermatophyta</taxon>
        <taxon>Magnoliopsida</taxon>
        <taxon>Liliopsida</taxon>
        <taxon>Poales</taxon>
        <taxon>Poaceae</taxon>
        <taxon>PACMAD clade</taxon>
        <taxon>Chloridoideae</taxon>
        <taxon>Cynodonteae</taxon>
        <taxon>Eleusininae</taxon>
        <taxon>Cynodon</taxon>
    </lineage>
</organism>
<gene>
    <name evidence="1" type="primary">matK</name>
</gene>
<name>MATK_CYNDA</name>
<geneLocation type="chloroplast"/>
<keyword id="KW-0150">Chloroplast</keyword>
<keyword id="KW-0507">mRNA processing</keyword>
<keyword id="KW-0934">Plastid</keyword>
<keyword id="KW-0694">RNA-binding</keyword>
<keyword id="KW-0819">tRNA processing</keyword>
<comment type="function">
    <text evidence="1">Usually encoded in the trnK tRNA gene intron. Probably assists in splicing its own and other chloroplast group II introns.</text>
</comment>
<comment type="subcellular location">
    <subcellularLocation>
        <location>Plastid</location>
        <location>Chloroplast</location>
    </subcellularLocation>
</comment>
<comment type="similarity">
    <text evidence="1">Belongs to the intron maturase 2 family. MatK subfamily.</text>
</comment>
<reference key="1">
    <citation type="submission" date="1999-04" db="EMBL/GenBank/DDBJ databases">
        <title>Phylogenetic relationships in subfamily Chloridoideae (Poaceae) based on matK sequences: a preliminary assessment.</title>
        <authorList>
            <person name="Hilu K.W."/>
            <person name="Alice L.A."/>
        </authorList>
    </citation>
    <scope>NUCLEOTIDE SEQUENCE [GENOMIC DNA]</scope>
</reference>
<evidence type="ECO:0000255" key="1">
    <source>
        <dbReference type="HAMAP-Rule" id="MF_01390"/>
    </source>
</evidence>
<feature type="chain" id="PRO_0000143351" description="Maturase K">
    <location>
        <begin position="1"/>
        <end position="513"/>
    </location>
</feature>
<dbReference type="EMBL" id="AF144584">
    <property type="protein sequence ID" value="AAF20340.1"/>
    <property type="molecule type" value="Genomic_DNA"/>
</dbReference>
<dbReference type="GO" id="GO:0009507">
    <property type="term" value="C:chloroplast"/>
    <property type="evidence" value="ECO:0007669"/>
    <property type="project" value="UniProtKB-SubCell"/>
</dbReference>
<dbReference type="GO" id="GO:0003723">
    <property type="term" value="F:RNA binding"/>
    <property type="evidence" value="ECO:0007669"/>
    <property type="project" value="UniProtKB-KW"/>
</dbReference>
<dbReference type="GO" id="GO:0006397">
    <property type="term" value="P:mRNA processing"/>
    <property type="evidence" value="ECO:0007669"/>
    <property type="project" value="UniProtKB-KW"/>
</dbReference>
<dbReference type="GO" id="GO:0008380">
    <property type="term" value="P:RNA splicing"/>
    <property type="evidence" value="ECO:0007669"/>
    <property type="project" value="UniProtKB-UniRule"/>
</dbReference>
<dbReference type="GO" id="GO:0008033">
    <property type="term" value="P:tRNA processing"/>
    <property type="evidence" value="ECO:0007669"/>
    <property type="project" value="UniProtKB-KW"/>
</dbReference>
<dbReference type="HAMAP" id="MF_01390">
    <property type="entry name" value="MatK"/>
    <property type="match status" value="1"/>
</dbReference>
<dbReference type="InterPro" id="IPR024937">
    <property type="entry name" value="Domain_X"/>
</dbReference>
<dbReference type="InterPro" id="IPR002866">
    <property type="entry name" value="Maturase_MatK"/>
</dbReference>
<dbReference type="InterPro" id="IPR024942">
    <property type="entry name" value="Maturase_MatK_N"/>
</dbReference>
<dbReference type="PANTHER" id="PTHR34811">
    <property type="entry name" value="MATURASE K"/>
    <property type="match status" value="1"/>
</dbReference>
<dbReference type="PANTHER" id="PTHR34811:SF1">
    <property type="entry name" value="MATURASE K"/>
    <property type="match status" value="1"/>
</dbReference>
<dbReference type="Pfam" id="PF01348">
    <property type="entry name" value="Intron_maturas2"/>
    <property type="match status" value="1"/>
</dbReference>
<dbReference type="Pfam" id="PF01824">
    <property type="entry name" value="MatK_N"/>
    <property type="match status" value="1"/>
</dbReference>
<sequence>MAKFEGYSEKQKSHQQYFVYPLLFQEYIYAFAHDYVLNGSEPVEIFGCNTKKFSSLLVKRLIIRMYQQNFWINSVNHPNQDRLLDHSNHFYSEFYSQILSEGFAIVVEIPFSLGQLSCPEEKEIPKFQNLRSIHSIFPFLEDKFLHLHYLSHIEIPYPIHFEILVQLLEYRIQDVPSLHLLRFFLNYYSNWNSLITSMKSIFLLKKENKRLSRFLYNSYVSEYEFFLLFLRKQSSCLRLTSSRTFLERIHFSRKMEHFGVMYPGFFRKTIWFFMDPLMHYVRYQRKVILASKGTLLLKKKWKSYLVNFSQYFFSFWTQPQRIRLNQLTNSCFDFLGYRSNVPINTFLVRNQMLENFILIDTRMKKFDTTAPGTPLIGSLAKAQFCTGSGHPISKPIWTDLSDWDILDRFGRICRNLFHYHSGSSKKQTLYRLKYILRLSCARTLARKHKSTVRTFMQRLGSVFLEEFFTEEEQVFSLMFAKTTHFSFHGSHSERIWYLDIIRIDDLVNPLTLN</sequence>
<proteinExistence type="inferred from homology"/>
<accession>Q9TIB3</accession>